<feature type="signal peptide" evidence="2">
    <location>
        <begin position="1"/>
        <end position="24"/>
    </location>
</feature>
<feature type="chain" id="PRO_0000016723" description="Proto-oncogene tyrosine-protein kinase ROS">
    <location>
        <begin position="25"/>
        <end position="2311"/>
    </location>
</feature>
<feature type="topological domain" description="Extracellular" evidence="2">
    <location>
        <begin position="25"/>
        <end position="1873"/>
    </location>
</feature>
<feature type="transmembrane region" description="Helical" evidence="2">
    <location>
        <begin position="1874"/>
        <end position="1898"/>
    </location>
</feature>
<feature type="topological domain" description="Cytoplasmic" evidence="2">
    <location>
        <begin position="1899"/>
        <end position="2311"/>
    </location>
</feature>
<feature type="domain" description="Fibronectin type-III 1" evidence="4">
    <location>
        <begin position="110"/>
        <end position="202"/>
    </location>
</feature>
<feature type="domain" description="Fibronectin type-III 2" evidence="4">
    <location>
        <begin position="203"/>
        <end position="294"/>
    </location>
</feature>
<feature type="domain" description="Fibronectin type-III 3" evidence="4">
    <location>
        <begin position="571"/>
        <end position="671"/>
    </location>
</feature>
<feature type="domain" description="Fibronectin type-III 4" evidence="4">
    <location>
        <begin position="952"/>
        <end position="1047"/>
    </location>
</feature>
<feature type="domain" description="Fibronectin type-III 5" evidence="4">
    <location>
        <begin position="1051"/>
        <end position="1158"/>
    </location>
</feature>
<feature type="domain" description="Fibronectin type-III 6" evidence="4">
    <location>
        <begin position="1459"/>
        <end position="1569"/>
    </location>
</feature>
<feature type="domain" description="Fibronectin type-III 7" evidence="4">
    <location>
        <begin position="1570"/>
        <end position="1669"/>
    </location>
</feature>
<feature type="domain" description="Fibronectin type-III 8" evidence="4">
    <location>
        <begin position="1671"/>
        <end position="1766"/>
    </location>
</feature>
<feature type="domain" description="Fibronectin type-III 9" evidence="4">
    <location>
        <begin position="1767"/>
        <end position="1868"/>
    </location>
</feature>
<feature type="domain" description="Protein kinase" evidence="3">
    <location>
        <begin position="1961"/>
        <end position="2240"/>
    </location>
</feature>
<feature type="region of interest" description="Disordered" evidence="6">
    <location>
        <begin position="1754"/>
        <end position="1786"/>
    </location>
</feature>
<feature type="compositionally biased region" description="Low complexity" evidence="6">
    <location>
        <begin position="1754"/>
        <end position="1764"/>
    </location>
</feature>
<feature type="compositionally biased region" description="Basic and acidic residues" evidence="6">
    <location>
        <begin position="1775"/>
        <end position="1786"/>
    </location>
</feature>
<feature type="active site" description="Proton acceptor" evidence="3 5">
    <location>
        <position position="2095"/>
    </location>
</feature>
<feature type="binding site" evidence="3">
    <location>
        <begin position="1967"/>
        <end position="1975"/>
    </location>
    <ligand>
        <name>ATP</name>
        <dbReference type="ChEBI" id="CHEBI:30616"/>
    </ligand>
</feature>
<feature type="binding site" evidence="3">
    <location>
        <position position="1996"/>
    </location>
    <ligand>
        <name>ATP</name>
        <dbReference type="ChEBI" id="CHEBI:30616"/>
    </ligand>
</feature>
<feature type="modified residue" description="Phosphotyrosine; by autocatalysis" evidence="1">
    <location>
        <position position="2131"/>
    </location>
</feature>
<feature type="glycosylation site" description="N-linked (GlcNAc...) asparagine" evidence="2">
    <location>
        <position position="49"/>
    </location>
</feature>
<feature type="glycosylation site" description="N-linked (GlcNAc...) asparagine" evidence="2">
    <location>
        <position position="65"/>
    </location>
</feature>
<feature type="glycosylation site" description="N-linked (GlcNAc...) asparagine" evidence="2">
    <location>
        <position position="77"/>
    </location>
</feature>
<feature type="glycosylation site" description="N-linked (GlcNAc...) asparagine" evidence="2">
    <location>
        <position position="123"/>
    </location>
</feature>
<feature type="glycosylation site" description="N-linked (GlcNAc...) asparagine" evidence="2">
    <location>
        <position position="132"/>
    </location>
</feature>
<feature type="glycosylation site" description="N-linked (GlcNAc...) asparagine" evidence="2">
    <location>
        <position position="265"/>
    </location>
</feature>
<feature type="glycosylation site" description="N-linked (GlcNAc...) asparagine" evidence="2">
    <location>
        <position position="287"/>
    </location>
</feature>
<feature type="glycosylation site" description="N-linked (GlcNAc...) asparagine" evidence="2">
    <location>
        <position position="307"/>
    </location>
</feature>
<feature type="glycosylation site" description="N-linked (GlcNAc...) asparagine" evidence="2">
    <location>
        <position position="333"/>
    </location>
</feature>
<feature type="glycosylation site" description="N-linked (GlcNAc...) asparagine" evidence="2">
    <location>
        <position position="377"/>
    </location>
</feature>
<feature type="glycosylation site" description="N-linked (GlcNAc...) asparagine" evidence="2">
    <location>
        <position position="405"/>
    </location>
</feature>
<feature type="glycosylation site" description="N-linked (GlcNAc...) asparagine" evidence="2">
    <location>
        <position position="480"/>
    </location>
</feature>
<feature type="glycosylation site" description="N-linked (GlcNAc...) asparagine" evidence="2">
    <location>
        <position position="607"/>
    </location>
</feature>
<feature type="glycosylation site" description="N-linked (GlcNAc...) asparagine" evidence="2">
    <location>
        <position position="628"/>
    </location>
</feature>
<feature type="glycosylation site" description="N-linked (GlcNAc...) asparagine" evidence="2">
    <location>
        <position position="706"/>
    </location>
</feature>
<feature type="glycosylation site" description="N-linked (GlcNAc...) asparagine" evidence="2">
    <location>
        <position position="714"/>
    </location>
</feature>
<feature type="glycosylation site" description="N-linked (GlcNAc...) asparagine" evidence="2">
    <location>
        <position position="911"/>
    </location>
</feature>
<feature type="glycosylation site" description="N-linked (GlcNAc...) asparagine" evidence="2">
    <location>
        <position position="940"/>
    </location>
</feature>
<feature type="glycosylation site" description="N-linked (GlcNAc...) asparagine" evidence="2">
    <location>
        <position position="962"/>
    </location>
</feature>
<feature type="glycosylation site" description="N-linked (GlcNAc...) asparagine" evidence="2">
    <location>
        <position position="971"/>
    </location>
</feature>
<feature type="glycosylation site" description="N-linked (GlcNAc...) asparagine" evidence="2">
    <location>
        <position position="1110"/>
    </location>
</feature>
<feature type="glycosylation site" description="N-linked (GlcNAc...) asparagine" evidence="2">
    <location>
        <position position="1154"/>
    </location>
</feature>
<feature type="glycosylation site" description="N-linked (GlcNAc...) asparagine" evidence="2">
    <location>
        <position position="1180"/>
    </location>
</feature>
<feature type="glycosylation site" description="N-linked (GlcNAc...) asparagine" evidence="2">
    <location>
        <position position="1233"/>
    </location>
</feature>
<feature type="glycosylation site" description="N-linked (GlcNAc...) asparagine" evidence="2">
    <location>
        <position position="1255"/>
    </location>
</feature>
<feature type="glycosylation site" description="N-linked (GlcNAc...) asparagine" evidence="2">
    <location>
        <position position="1282"/>
    </location>
</feature>
<feature type="glycosylation site" description="N-linked (GlcNAc...) asparagine" evidence="2">
    <location>
        <position position="1316"/>
    </location>
</feature>
<feature type="glycosylation site" description="N-linked (GlcNAc...) asparagine" evidence="2">
    <location>
        <position position="1470"/>
    </location>
</feature>
<feature type="glycosylation site" description="N-linked (GlcNAc...) asparagine" evidence="2">
    <location>
        <position position="1509"/>
    </location>
</feature>
<feature type="glycosylation site" description="N-linked (GlcNAc...) asparagine" evidence="2">
    <location>
        <position position="1588"/>
    </location>
</feature>
<feature type="glycosylation site" description="N-linked (GlcNAc...) asparagine" evidence="2">
    <location>
        <position position="1628"/>
    </location>
</feature>
<feature type="glycosylation site" description="N-linked (GlcNAc...) asparagine" evidence="2">
    <location>
        <position position="1682"/>
    </location>
</feature>
<feature type="glycosylation site" description="N-linked (GlcNAc...) asparagine" evidence="2">
    <location>
        <position position="1696"/>
    </location>
</feature>
<feature type="glycosylation site" description="N-linked (GlcNAc...) asparagine" evidence="2">
    <location>
        <position position="1730"/>
    </location>
</feature>
<feature type="glycosylation site" description="N-linked (GlcNAc...) asparagine" evidence="2">
    <location>
        <position position="1792"/>
    </location>
</feature>
<feature type="glycosylation site" description="N-linked (GlcNAc...) asparagine" evidence="2">
    <location>
        <position position="1795"/>
    </location>
</feature>
<feature type="glycosylation site" description="N-linked (GlcNAc...) asparagine" evidence="2">
    <location>
        <position position="1822"/>
    </location>
</feature>
<feature type="sequence conflict" description="In Ref. 2." evidence="12" ref="2">
    <original>N</original>
    <variation>S</variation>
    <location>
        <position position="1827"/>
    </location>
</feature>
<feature type="sequence conflict" description="In Ref. 3 and 4." evidence="12" ref="3 4">
    <original>IN</original>
    <variation>LP</variation>
    <location>
        <begin position="2140"/>
        <end position="2141"/>
    </location>
</feature>
<feature type="sequence conflict" description="In Ref. 3; AAA49058." evidence="12" ref="3">
    <original>FINQAFEDIDVPPADSDSILSTTLMEARDQEGLNYLVV</original>
    <variation>SSTKLLRVSLGSAVPTAFAQTCNSVNVESQNGLGWKGP</variation>
    <location>
        <begin position="2255"/>
        <end position="2292"/>
    </location>
</feature>
<name>ROS1_CHICK</name>
<comment type="function">
    <text evidence="7 8 10 11">Orphan receptor tyrosine kinase (RTK) that may activate several downstream signaling pathways related to cell differentiation, proliferation, growth and survival including the PI3 kinase-mTOR signaling pathway. Mediates the phosphorylation of PTPN11, an activator of this pathway. May also phosphorylate and activate the transcription factor STAT3 to control anchorage-independent cell growth. Mediates the phosphorylation and the activation of VAV3, a guanine nucleotide exchange factor regulating cell morphology. May activate other downstream signaling proteins including AKT1, MAPK1, MAPK3, IRS1, and PLCG2.</text>
</comment>
<comment type="catalytic activity">
    <reaction evidence="5">
        <text>L-tyrosyl-[protein] + ATP = O-phospho-L-tyrosyl-[protein] + ADP + H(+)</text>
        <dbReference type="Rhea" id="RHEA:10596"/>
        <dbReference type="Rhea" id="RHEA-COMP:10136"/>
        <dbReference type="Rhea" id="RHEA-COMP:20101"/>
        <dbReference type="ChEBI" id="CHEBI:15378"/>
        <dbReference type="ChEBI" id="CHEBI:30616"/>
        <dbReference type="ChEBI" id="CHEBI:46858"/>
        <dbReference type="ChEBI" id="CHEBI:61978"/>
        <dbReference type="ChEBI" id="CHEBI:456216"/>
        <dbReference type="EC" id="2.7.10.1"/>
    </reaction>
</comment>
<comment type="subunit">
    <text evidence="7">Interacts with VAV3; constitutive interaction mediating VAV3 phosphorylation.</text>
</comment>
<comment type="subcellular location">
    <subcellularLocation>
        <location evidence="13">Cell membrane</location>
        <topology evidence="13">Single-pass type I membrane protein</topology>
    </subcellularLocation>
</comment>
<comment type="tissue specificity">
    <text evidence="9">Highest expression in kidney. Also expressed in gonad, thymus, bursa, brain and kidney.</text>
</comment>
<comment type="similarity">
    <text evidence="3">Belongs to the protein kinase superfamily. Tyr protein kinase family. Insulin receptor subfamily.</text>
</comment>
<sequence length="2311" mass="260961">MRNACLLLNRLGAFYFIWISAAYCSFSKNCQDLCTSNLEGELGIANLCNVSDINVACTQGCQFWNATEQVNCPLKCNKTYTRECETVSCKFGCSRAEDAYGVEAQNCLNKPGAPFASSIGSHNITLGWKPANISEVKYIIQWKFHQLPGDWRYTEVVSETSYTVKDLQAFTEYEFRVVWIITSQLQLHSPPSPSYRTHASGVPTTAPIIKDIQSSSPNTVEVSWFPPLFPNGLIVGYNLVLTSENHELLRASRGHSFQFYSTFPNSTYRFSIVAVNEAGAGPPAEANITTPESKVKEKAKWLFLSRNQSLRKRYMEHFLEAAHCLQNGIIHHNITGISVNVYQQVVYFSEGNSIWVKGVVDMSDVSDLTLFYTGWGNITSISVDWLYQRMYFVMNEKIHVCQLENCTAAEDITPPYETSPRKIVADPYNGYIFCLLEDGIYRANLPLFPDTASAASLVVKSHTLRDFMINFQSKRLIFFNKTEQAFVSGFLDGSEFHTLRAHVPLDDMESFVYEDNIFTVTDGRAVFHEEISQVGSSSFNEYVVDCSLEYPEYFGFGNLLFYAASTQPYPLPTLPRLVTVLFGSDQAVISWSPPEYTIGTSRSAWQNWTYDVKVSSQSTFEEEWVVSNITDTRFAVKNLVSFTEYEMSVRAVSPAGEGPWSEPFRGMTFEEAEEEPYILAVGAEGLWKQRLDSYGPGEFLYPHIRNISDLDWYNDTLYWSNSMGKVQTWSMNKKEGTTENSYVPDIKNARMLAFDWLGQCLYWAGKANTIYRKSLLGDHMDVVAHVVYVVKDLAVDSVNGYLYWATTYTVESARLNGEEYLILQEHLQFSGKQVVGLALDLTSGFLYWLVQDGLCLNLYRISICKESCGNIMVTEISAWSVSEVSQNALQYYSGRLFWINRLKFITTQELNQSISIPFSEPAEFAAFTLVHTSLKPLPGNFSFTPKVIPSSVPESSFKIKGNSSSFHIIWNASTDVQWGTVFYCVGSNALQMRTLESERCLHPHDLTVPSYKVDWLEPFTLFDFSVTPYTYWGKAPTTSVYLRAPEGVPSAPANPRIYVLHSNTHEGEEKVLVELRWDKPERDNGVLTQFRVYYQLLYESGAADTLMEWNVSDVKPTALLFSIRDEHPRLTVRFQVQAFTSVGPGPMSDVAQRNSSDIFPVPTLITFSSNKLFLTDIDSNHTIWEVLTNRNIKDICYTADDDKVYYILEDSLFLLNVQSTSESQLFEDVFLRNVTAITVDWIARHLFVAMKTSWNETQVFFIDLELKTKSLKALNIQLGKRNSTISSLLSYPFLSRLYWIEELDYGSRMFYYDILNNTMYHILGYESVEEKMRNYCNCNVAEAELGRPISIDVTDIKKPQLLFIRGRDEIWASDVDACHCWRITKIPSFQGTKIGSLTVDKQFIYWTIEKKEYTEICLADKESTRHSLQRKANHELKILAYSSAMQSYPDKKCLTPLLDTEKPTILDTTNTSFTLSLPSVTTQQLCPSISQPTPTYLVFFREITSNHENSTYHFSTLLQKTLEIQEPIAVINNLKPFSTYAIQVAVKNYYSNQNQLAVGREAISTTLYGVPEGVDSIKTVVLSDTTINISWSEPLEPNGPLESIRYQISVNLLSLFPEAPLRKSEFPNGTLSWSVSDLQSGTNNLFKVLAFHPNENWFSESVPVIAKTFETPLSPSNIIPRNTSFQLEWRAPLHINGTSFWFELSKWQTRSDWFSPASTTCTVGPVYTCNLTGTLPSANYLVRATVVYVTGMKSTSSPTSFKTTAGVPSKPGTPKRAEDSKNSVQWEKAEDNGSNLTYYILESRKQSGNTNKVKSLWVVVYNGSCDNICTWKAENLEGTFQFRAAAANMLGLGEYSDTSKDIVLAKDTVTSPDITAIVAVIGAVVLGLTIIILFGFVWHQRWKSRKPASTGQIVLVKEDKELAQLRGMAETVGLANACYAVSTLPSQAEIESLPAFPRDKLNLHKLLGSGAFGEVYEGTALDILADGSGESRVAVKTLKRGATDQEKSEFLKEAHLMSKFDHPHILKLLGVCLLNEPQYLILELMEGGDLLSYLRGARKQKFQSPLLTLTDLLDICLDICKGCVYLEKMRFIHRDLAARNCLVSEKQYGSCSRVVKIGDFGLARDIYKNDYYRKRGEGLINVRWMAPESLIDGVFTNHSDVWAFGVLVWETLTLGQQPYPGLSNIEVLHHVRSGGRLESPNNCPDDIRDLMTRCWAQDPHNRPTFFYIQHKLQEIRHSPLCFSYFLGDKESVAGFINQAFEDIDVPPADSDSILSTTLMEARDQEGLNYLVVVKESNQDQGSISSAELTSV</sequence>
<proteinExistence type="evidence at protein level"/>
<organism>
    <name type="scientific">Gallus gallus</name>
    <name type="common">Chicken</name>
    <dbReference type="NCBI Taxonomy" id="9031"/>
    <lineage>
        <taxon>Eukaryota</taxon>
        <taxon>Metazoa</taxon>
        <taxon>Chordata</taxon>
        <taxon>Craniata</taxon>
        <taxon>Vertebrata</taxon>
        <taxon>Euteleostomi</taxon>
        <taxon>Archelosauria</taxon>
        <taxon>Archosauria</taxon>
        <taxon>Dinosauria</taxon>
        <taxon>Saurischia</taxon>
        <taxon>Theropoda</taxon>
        <taxon>Coelurosauria</taxon>
        <taxon>Aves</taxon>
        <taxon>Neognathae</taxon>
        <taxon>Galloanserae</taxon>
        <taxon>Galliformes</taxon>
        <taxon>Phasianidae</taxon>
        <taxon>Phasianinae</taxon>
        <taxon>Gallus</taxon>
    </lineage>
</organism>
<keyword id="KW-0067">ATP-binding</keyword>
<keyword id="KW-1003">Cell membrane</keyword>
<keyword id="KW-0325">Glycoprotein</keyword>
<keyword id="KW-0418">Kinase</keyword>
<keyword id="KW-0472">Membrane</keyword>
<keyword id="KW-0547">Nucleotide-binding</keyword>
<keyword id="KW-0597">Phosphoprotein</keyword>
<keyword id="KW-0656">Proto-oncogene</keyword>
<keyword id="KW-0675">Receptor</keyword>
<keyword id="KW-1185">Reference proteome</keyword>
<keyword id="KW-0677">Repeat</keyword>
<keyword id="KW-0732">Signal</keyword>
<keyword id="KW-0808">Transferase</keyword>
<keyword id="KW-0812">Transmembrane</keyword>
<keyword id="KW-1133">Transmembrane helix</keyword>
<keyword id="KW-0829">Tyrosine-protein kinase</keyword>
<reference key="1">
    <citation type="journal article" date="1991" name="Oncogene">
        <title>The proto-oncogene c-ros codes for a transmembrane tyrosine protein kinase sharing sequence and structural homology with sevenless protein of Drosophila melanogaster.</title>
        <authorList>
            <person name="Chen J.M."/>
            <person name="Heller D."/>
            <person name="Poon B."/>
            <person name="Kang L."/>
            <person name="Wang L.-H."/>
        </authorList>
    </citation>
    <scope>NUCLEOTIDE SEQUENCE [MRNA]</scope>
    <scope>TISSUE SPECIFICITY</scope>
</reference>
<reference key="2">
    <citation type="journal article" date="1986" name="Mol. Cell. Biol.">
        <title>Human c-ros-1 gene homologous to the v-ros sequence of UR2 sarcoma virus encodes for a transmembrane receptorlike molecule.</title>
        <authorList>
            <person name="Matsushime H."/>
            <person name="Wang L.-H."/>
            <person name="Shibuya M."/>
        </authorList>
    </citation>
    <scope>NUCLEOTIDE SEQUENCE OF 1805-1867</scope>
</reference>
<reference key="3">
    <citation type="journal article" date="1986" name="Mol. Cell. Biol.">
        <title>Proto-oncogene c-ros codes for a molecule with structural features common to those of growth factor receptors and displays tissue specific and developmentally regulated expression.</title>
        <authorList>
            <person name="Neckameyer W.S."/>
            <person name="Shibuya M."/>
            <person name="Hsu M.-T."/>
            <person name="Wang L.-H."/>
        </authorList>
    </citation>
    <scope>NUCLEOTIDE SEQUENCE [GENOMIC DNA] OF 1868-2292</scope>
</reference>
<reference key="4">
    <citation type="journal article" date="1987" name="Oncogene">
        <title>Chicken proto-oncogene c-ros cDNA clones: identification of a c-ros RNA transcript and deduction of the amino acid sequence of the carboxyl terminus of the c-ros product.</title>
        <authorList>
            <person name="Podell S.B."/>
            <person name="Sefton B.M."/>
        </authorList>
    </citation>
    <scope>NUCLEOTIDE SEQUENCE [MRNA] OF 2010-2311</scope>
    <source>
        <tissue>Kidney</tissue>
    </source>
</reference>
<reference key="5">
    <citation type="journal article" date="1996" name="Mol. Cell. Biol.">
        <title>Two chimeric receptors of epidermal growth factor receptor and c-Ros that differ in their transmembrane domains have opposite effects on cell growth.</title>
        <authorList>
            <person name="Xiong Q."/>
            <person name="Chan J.L."/>
            <person name="Zong C.S."/>
            <person name="Wang L.H."/>
        </authorList>
    </citation>
    <scope>FUNCTION IN CELL PROLIFERATION</scope>
    <scope>SUBCELLULAR LOCATION</scope>
</reference>
<reference key="6">
    <citation type="journal article" date="1998" name="J. Biol. Chem.">
        <title>Stat3 plays an important role in oncogenic Ros- and insulin-like growth factor I receptor-induced anchorage-independent growth.</title>
        <authorList>
            <person name="Zong C.S."/>
            <person name="Zeng L."/>
            <person name="Jiang Y."/>
            <person name="Sadowski H.B."/>
            <person name="Wang L.H."/>
        </authorList>
    </citation>
    <scope>FUNCTION IN STAT3 ACTIVATION</scope>
</reference>
<reference key="7">
    <citation type="journal article" date="2000" name="Mol. Cell. Biol.">
        <title>Vav3 mediates receptor protein tyrosine kinase signaling, regulates GTPase activity, modulates cell morphology, and induces cell transformation.</title>
        <authorList>
            <person name="Zeng L."/>
            <person name="Sachdev P."/>
            <person name="Yan L."/>
            <person name="Chan J.L."/>
            <person name="Trenkle T."/>
            <person name="McClelland M."/>
            <person name="Welsh J."/>
            <person name="Wang L.H."/>
        </authorList>
    </citation>
    <scope>FUNCTION IN VAV3 ACTIVATION</scope>
    <scope>INTERACTION WITH VAV3</scope>
</reference>
<reference key="8">
    <citation type="journal article" date="2002" name="J. Biol. Chem.">
        <title>The role of phosphatidylinositol 3-kinase, rho family GTPases, and STAT3 in Ros-induced cell transformation.</title>
        <authorList>
            <person name="Nguyen K.T."/>
            <person name="Zong C.S."/>
            <person name="Uttamsingh S."/>
            <person name="Sachdev P."/>
            <person name="Bhanot M."/>
            <person name="Le M.T."/>
            <person name="Chan J.L."/>
            <person name="Wang L.H."/>
        </authorList>
    </citation>
    <scope>FUNCTION IN PI3 KINASE AND STAT3 ACTIVATION</scope>
</reference>
<protein>
    <recommendedName>
        <fullName>Proto-oncogene tyrosine-protein kinase ROS</fullName>
        <ecNumber>2.7.10.1</ecNumber>
    </recommendedName>
    <alternativeName>
        <fullName>Proto-oncogene c-Ros</fullName>
    </alternativeName>
    <alternativeName>
        <fullName>Proto-oncogene c-Ros-1</fullName>
    </alternativeName>
    <alternativeName>
        <fullName>Receptor tyrosine kinase c-ros oncogene 1</fullName>
    </alternativeName>
    <alternativeName>
        <fullName>c-Ros receptor tyrosine kinase</fullName>
    </alternativeName>
</protein>
<accession>P08941</accession>
<evidence type="ECO:0000250" key="1"/>
<evidence type="ECO:0000255" key="2"/>
<evidence type="ECO:0000255" key="3">
    <source>
        <dbReference type="PROSITE-ProRule" id="PRU00159"/>
    </source>
</evidence>
<evidence type="ECO:0000255" key="4">
    <source>
        <dbReference type="PROSITE-ProRule" id="PRU00316"/>
    </source>
</evidence>
<evidence type="ECO:0000255" key="5">
    <source>
        <dbReference type="PROSITE-ProRule" id="PRU10028"/>
    </source>
</evidence>
<evidence type="ECO:0000256" key="6">
    <source>
        <dbReference type="SAM" id="MobiDB-lite"/>
    </source>
</evidence>
<evidence type="ECO:0000269" key="7">
    <source>
    </source>
</evidence>
<evidence type="ECO:0000269" key="8">
    <source>
    </source>
</evidence>
<evidence type="ECO:0000269" key="9">
    <source>
    </source>
</evidence>
<evidence type="ECO:0000269" key="10">
    <source>
    </source>
</evidence>
<evidence type="ECO:0000269" key="11">
    <source>
    </source>
</evidence>
<evidence type="ECO:0000305" key="12"/>
<evidence type="ECO:0000305" key="13">
    <source>
    </source>
</evidence>
<dbReference type="EC" id="2.7.10.1"/>
<dbReference type="EMBL" id="M13013">
    <property type="protein sequence ID" value="AAA49058.1"/>
    <property type="molecule type" value="Genomic_DNA"/>
</dbReference>
<dbReference type="EMBL" id="X06770">
    <property type="protein sequence ID" value="CAA29938.1"/>
    <property type="molecule type" value="mRNA"/>
</dbReference>
<dbReference type="PIR" id="A60197">
    <property type="entry name" value="TVCHSR"/>
</dbReference>
<dbReference type="SMR" id="P08941"/>
<dbReference type="STRING" id="9031.ENSGALP00000036566"/>
<dbReference type="GlyCosmos" id="P08941">
    <property type="glycosylation" value="37 sites, No reported glycans"/>
</dbReference>
<dbReference type="GlyGen" id="P08941">
    <property type="glycosylation" value="37 sites"/>
</dbReference>
<dbReference type="iPTMnet" id="P08941"/>
<dbReference type="PaxDb" id="9031-ENSGALP00000036566"/>
<dbReference type="VEuPathDB" id="HostDB:geneid_396192"/>
<dbReference type="eggNOG" id="KOG1095">
    <property type="taxonomic scope" value="Eukaryota"/>
</dbReference>
<dbReference type="InParanoid" id="P08941"/>
<dbReference type="OrthoDB" id="65481at2759"/>
<dbReference type="PhylomeDB" id="P08941"/>
<dbReference type="Proteomes" id="UP000000539">
    <property type="component" value="Unassembled WGS sequence"/>
</dbReference>
<dbReference type="GO" id="GO:0005886">
    <property type="term" value="C:plasma membrane"/>
    <property type="evidence" value="ECO:0000318"/>
    <property type="project" value="GO_Central"/>
</dbReference>
<dbReference type="GO" id="GO:0043235">
    <property type="term" value="C:receptor complex"/>
    <property type="evidence" value="ECO:0000318"/>
    <property type="project" value="GO_Central"/>
</dbReference>
<dbReference type="GO" id="GO:0005524">
    <property type="term" value="F:ATP binding"/>
    <property type="evidence" value="ECO:0007669"/>
    <property type="project" value="UniProtKB-KW"/>
</dbReference>
<dbReference type="GO" id="GO:0004713">
    <property type="term" value="F:protein tyrosine kinase activity"/>
    <property type="evidence" value="ECO:0000250"/>
    <property type="project" value="UniProtKB"/>
</dbReference>
<dbReference type="GO" id="GO:0004714">
    <property type="term" value="F:transmembrane receptor protein tyrosine kinase activity"/>
    <property type="evidence" value="ECO:0000318"/>
    <property type="project" value="GO_Central"/>
</dbReference>
<dbReference type="GO" id="GO:0030154">
    <property type="term" value="P:cell differentiation"/>
    <property type="evidence" value="ECO:0000250"/>
    <property type="project" value="UniProtKB"/>
</dbReference>
<dbReference type="GO" id="GO:0007169">
    <property type="term" value="P:cell surface receptor protein tyrosine kinase signaling pathway"/>
    <property type="evidence" value="ECO:0000318"/>
    <property type="project" value="GO_Central"/>
</dbReference>
<dbReference type="GO" id="GO:0002066">
    <property type="term" value="P:columnar/cuboidal epithelial cell development"/>
    <property type="evidence" value="ECO:0000250"/>
    <property type="project" value="UniProtKB"/>
</dbReference>
<dbReference type="GO" id="GO:0006468">
    <property type="term" value="P:protein phosphorylation"/>
    <property type="evidence" value="ECO:0000250"/>
    <property type="project" value="UniProtKB"/>
</dbReference>
<dbReference type="GO" id="GO:0001558">
    <property type="term" value="P:regulation of cell growth"/>
    <property type="evidence" value="ECO:0000250"/>
    <property type="project" value="UniProtKB"/>
</dbReference>
<dbReference type="GO" id="GO:0070372">
    <property type="term" value="P:regulation of ERK1 and ERK2 cascade"/>
    <property type="evidence" value="ECO:0000250"/>
    <property type="project" value="UniProtKB"/>
</dbReference>
<dbReference type="GO" id="GO:0032006">
    <property type="term" value="P:regulation of TOR signaling"/>
    <property type="evidence" value="ECO:0000250"/>
    <property type="project" value="UniProtKB"/>
</dbReference>
<dbReference type="CDD" id="cd00063">
    <property type="entry name" value="FN3"/>
    <property type="match status" value="7"/>
</dbReference>
<dbReference type="CDD" id="cd05044">
    <property type="entry name" value="PTKc_c-ros"/>
    <property type="match status" value="1"/>
</dbReference>
<dbReference type="FunFam" id="1.10.510.10:FF:000341">
    <property type="entry name" value="Tyrosine-protein kinase receptor"/>
    <property type="match status" value="1"/>
</dbReference>
<dbReference type="FunFam" id="2.120.10.30:FF:000038">
    <property type="entry name" value="Tyrosine-protein kinase receptor"/>
    <property type="match status" value="1"/>
</dbReference>
<dbReference type="FunFam" id="2.120.10.30:FF:000042">
    <property type="entry name" value="Tyrosine-protein kinase receptor"/>
    <property type="match status" value="1"/>
</dbReference>
<dbReference type="FunFam" id="2.120.10.30:FF:000044">
    <property type="entry name" value="Tyrosine-protein kinase receptor"/>
    <property type="match status" value="1"/>
</dbReference>
<dbReference type="FunFam" id="2.60.40.10:FF:000882">
    <property type="entry name" value="Tyrosine-protein kinase receptor"/>
    <property type="match status" value="1"/>
</dbReference>
<dbReference type="FunFam" id="2.60.40.10:FF:000984">
    <property type="entry name" value="Tyrosine-protein kinase receptor"/>
    <property type="match status" value="1"/>
</dbReference>
<dbReference type="FunFam" id="2.60.40.10:FF:001018">
    <property type="entry name" value="Tyrosine-protein kinase receptor"/>
    <property type="match status" value="1"/>
</dbReference>
<dbReference type="FunFam" id="2.60.40.10:FF:001024">
    <property type="entry name" value="Tyrosine-protein kinase receptor"/>
    <property type="match status" value="1"/>
</dbReference>
<dbReference type="FunFam" id="2.60.40.10:FF:001816">
    <property type="entry name" value="Tyrosine-protein kinase receptor"/>
    <property type="match status" value="1"/>
</dbReference>
<dbReference type="FunFam" id="3.30.200.20:FF:000301">
    <property type="entry name" value="Tyrosine-protein kinase receptor"/>
    <property type="match status" value="1"/>
</dbReference>
<dbReference type="Gene3D" id="2.60.40.10">
    <property type="entry name" value="Immunoglobulins"/>
    <property type="match status" value="7"/>
</dbReference>
<dbReference type="Gene3D" id="3.30.200.20">
    <property type="entry name" value="Phosphorylase Kinase, domain 1"/>
    <property type="match status" value="1"/>
</dbReference>
<dbReference type="Gene3D" id="2.120.10.30">
    <property type="entry name" value="TolB, C-terminal domain"/>
    <property type="match status" value="3"/>
</dbReference>
<dbReference type="Gene3D" id="1.10.510.10">
    <property type="entry name" value="Transferase(Phosphotransferase) domain 1"/>
    <property type="match status" value="1"/>
</dbReference>
<dbReference type="InterPro" id="IPR011042">
    <property type="entry name" value="6-blade_b-propeller_TolB-like"/>
</dbReference>
<dbReference type="InterPro" id="IPR003961">
    <property type="entry name" value="FN3_dom"/>
</dbReference>
<dbReference type="InterPro" id="IPR036116">
    <property type="entry name" value="FN3_sf"/>
</dbReference>
<dbReference type="InterPro" id="IPR013783">
    <property type="entry name" value="Ig-like_fold"/>
</dbReference>
<dbReference type="InterPro" id="IPR011009">
    <property type="entry name" value="Kinase-like_dom_sf"/>
</dbReference>
<dbReference type="InterPro" id="IPR000033">
    <property type="entry name" value="LDLR_classB_rpt"/>
</dbReference>
<dbReference type="InterPro" id="IPR000719">
    <property type="entry name" value="Prot_kinase_dom"/>
</dbReference>
<dbReference type="InterPro" id="IPR017441">
    <property type="entry name" value="Protein_kinase_ATP_BS"/>
</dbReference>
<dbReference type="InterPro" id="IPR050122">
    <property type="entry name" value="RTK"/>
</dbReference>
<dbReference type="InterPro" id="IPR001245">
    <property type="entry name" value="Ser-Thr/Tyr_kinase_cat_dom"/>
</dbReference>
<dbReference type="InterPro" id="IPR008266">
    <property type="entry name" value="Tyr_kinase_AS"/>
</dbReference>
<dbReference type="InterPro" id="IPR020635">
    <property type="entry name" value="Tyr_kinase_cat_dom"/>
</dbReference>
<dbReference type="InterPro" id="IPR002011">
    <property type="entry name" value="Tyr_kinase_rcpt_2_CS"/>
</dbReference>
<dbReference type="PANTHER" id="PTHR24416:SF527">
    <property type="entry name" value="PROTO-ONCOGENE TYROSINE-PROTEIN KINASE ROS"/>
    <property type="match status" value="1"/>
</dbReference>
<dbReference type="PANTHER" id="PTHR24416">
    <property type="entry name" value="TYROSINE-PROTEIN KINASE RECEPTOR"/>
    <property type="match status" value="1"/>
</dbReference>
<dbReference type="Pfam" id="PF00041">
    <property type="entry name" value="fn3"/>
    <property type="match status" value="3"/>
</dbReference>
<dbReference type="Pfam" id="PF07714">
    <property type="entry name" value="PK_Tyr_Ser-Thr"/>
    <property type="match status" value="1"/>
</dbReference>
<dbReference type="PRINTS" id="PR00109">
    <property type="entry name" value="TYRKINASE"/>
</dbReference>
<dbReference type="SMART" id="SM00060">
    <property type="entry name" value="FN3"/>
    <property type="match status" value="9"/>
</dbReference>
<dbReference type="SMART" id="SM00135">
    <property type="entry name" value="LY"/>
    <property type="match status" value="3"/>
</dbReference>
<dbReference type="SMART" id="SM00219">
    <property type="entry name" value="TyrKc"/>
    <property type="match status" value="1"/>
</dbReference>
<dbReference type="SUPFAM" id="SSF49265">
    <property type="entry name" value="Fibronectin type III"/>
    <property type="match status" value="5"/>
</dbReference>
<dbReference type="SUPFAM" id="SSF56112">
    <property type="entry name" value="Protein kinase-like (PK-like)"/>
    <property type="match status" value="1"/>
</dbReference>
<dbReference type="SUPFAM" id="SSF63825">
    <property type="entry name" value="YWTD domain"/>
    <property type="match status" value="3"/>
</dbReference>
<dbReference type="PROSITE" id="PS50853">
    <property type="entry name" value="FN3"/>
    <property type="match status" value="9"/>
</dbReference>
<dbReference type="PROSITE" id="PS00107">
    <property type="entry name" value="PROTEIN_KINASE_ATP"/>
    <property type="match status" value="1"/>
</dbReference>
<dbReference type="PROSITE" id="PS50011">
    <property type="entry name" value="PROTEIN_KINASE_DOM"/>
    <property type="match status" value="1"/>
</dbReference>
<dbReference type="PROSITE" id="PS00109">
    <property type="entry name" value="PROTEIN_KINASE_TYR"/>
    <property type="match status" value="1"/>
</dbReference>
<dbReference type="PROSITE" id="PS00239">
    <property type="entry name" value="RECEPTOR_TYR_KIN_II"/>
    <property type="match status" value="1"/>
</dbReference>
<gene>
    <name type="primary">ROS1</name>
</gene>